<feature type="chain" id="PRO_1000043026" description="Anthranilate phosphoribosyltransferase">
    <location>
        <begin position="1"/>
        <end position="342"/>
    </location>
</feature>
<feature type="binding site" evidence="1">
    <location>
        <position position="81"/>
    </location>
    <ligand>
        <name>5-phospho-alpha-D-ribose 1-diphosphate</name>
        <dbReference type="ChEBI" id="CHEBI:58017"/>
    </ligand>
</feature>
<feature type="binding site" evidence="1">
    <location>
        <position position="81"/>
    </location>
    <ligand>
        <name>anthranilate</name>
        <dbReference type="ChEBI" id="CHEBI:16567"/>
        <label>1</label>
    </ligand>
</feature>
<feature type="binding site" evidence="1">
    <location>
        <begin position="84"/>
        <end position="85"/>
    </location>
    <ligand>
        <name>5-phospho-alpha-D-ribose 1-diphosphate</name>
        <dbReference type="ChEBI" id="CHEBI:58017"/>
    </ligand>
</feature>
<feature type="binding site" evidence="1">
    <location>
        <begin position="91"/>
        <end position="94"/>
    </location>
    <ligand>
        <name>5-phospho-alpha-D-ribose 1-diphosphate</name>
        <dbReference type="ChEBI" id="CHEBI:58017"/>
    </ligand>
</feature>
<feature type="binding site" evidence="1">
    <location>
        <position position="93"/>
    </location>
    <ligand>
        <name>Mg(2+)</name>
        <dbReference type="ChEBI" id="CHEBI:18420"/>
        <label>1</label>
    </ligand>
</feature>
<feature type="binding site" evidence="1">
    <location>
        <begin position="109"/>
        <end position="117"/>
    </location>
    <ligand>
        <name>5-phospho-alpha-D-ribose 1-diphosphate</name>
        <dbReference type="ChEBI" id="CHEBI:58017"/>
    </ligand>
</feature>
<feature type="binding site" evidence="1">
    <location>
        <position position="112"/>
    </location>
    <ligand>
        <name>anthranilate</name>
        <dbReference type="ChEBI" id="CHEBI:16567"/>
        <label>1</label>
    </ligand>
</feature>
<feature type="binding site" evidence="1">
    <location>
        <position position="121"/>
    </location>
    <ligand>
        <name>5-phospho-alpha-D-ribose 1-diphosphate</name>
        <dbReference type="ChEBI" id="CHEBI:58017"/>
    </ligand>
</feature>
<feature type="binding site" evidence="1">
    <location>
        <position position="167"/>
    </location>
    <ligand>
        <name>anthranilate</name>
        <dbReference type="ChEBI" id="CHEBI:16567"/>
        <label>2</label>
    </ligand>
</feature>
<feature type="binding site" evidence="1">
    <location>
        <position position="226"/>
    </location>
    <ligand>
        <name>Mg(2+)</name>
        <dbReference type="ChEBI" id="CHEBI:18420"/>
        <label>2</label>
    </ligand>
</feature>
<feature type="binding site" evidence="1">
    <location>
        <position position="227"/>
    </location>
    <ligand>
        <name>Mg(2+)</name>
        <dbReference type="ChEBI" id="CHEBI:18420"/>
        <label>1</label>
    </ligand>
</feature>
<feature type="binding site" evidence="1">
    <location>
        <position position="227"/>
    </location>
    <ligand>
        <name>Mg(2+)</name>
        <dbReference type="ChEBI" id="CHEBI:18420"/>
        <label>2</label>
    </ligand>
</feature>
<keyword id="KW-0028">Amino-acid biosynthesis</keyword>
<keyword id="KW-0057">Aromatic amino acid biosynthesis</keyword>
<keyword id="KW-0328">Glycosyltransferase</keyword>
<keyword id="KW-0460">Magnesium</keyword>
<keyword id="KW-0479">Metal-binding</keyword>
<keyword id="KW-0808">Transferase</keyword>
<keyword id="KW-0822">Tryptophan biosynthesis</keyword>
<protein>
    <recommendedName>
        <fullName evidence="1">Anthranilate phosphoribosyltransferase</fullName>
        <ecNumber evidence="1">2.4.2.18</ecNumber>
    </recommendedName>
</protein>
<dbReference type="EC" id="2.4.2.18" evidence="1"/>
<dbReference type="EMBL" id="CP000514">
    <property type="protein sequence ID" value="ABM20589.1"/>
    <property type="molecule type" value="Genomic_DNA"/>
</dbReference>
<dbReference type="RefSeq" id="WP_011786930.1">
    <property type="nucleotide sequence ID" value="NC_008740.1"/>
</dbReference>
<dbReference type="SMR" id="A1U6H0"/>
<dbReference type="STRING" id="351348.Maqu_3519"/>
<dbReference type="KEGG" id="maq:Maqu_3519"/>
<dbReference type="eggNOG" id="COG0547">
    <property type="taxonomic scope" value="Bacteria"/>
</dbReference>
<dbReference type="HOGENOM" id="CLU_034315_2_1_6"/>
<dbReference type="OrthoDB" id="9806430at2"/>
<dbReference type="UniPathway" id="UPA00035">
    <property type="reaction ID" value="UER00041"/>
</dbReference>
<dbReference type="Proteomes" id="UP000000998">
    <property type="component" value="Chromosome"/>
</dbReference>
<dbReference type="GO" id="GO:0005829">
    <property type="term" value="C:cytosol"/>
    <property type="evidence" value="ECO:0007669"/>
    <property type="project" value="TreeGrafter"/>
</dbReference>
<dbReference type="GO" id="GO:0004048">
    <property type="term" value="F:anthranilate phosphoribosyltransferase activity"/>
    <property type="evidence" value="ECO:0007669"/>
    <property type="project" value="UniProtKB-UniRule"/>
</dbReference>
<dbReference type="GO" id="GO:0000287">
    <property type="term" value="F:magnesium ion binding"/>
    <property type="evidence" value="ECO:0007669"/>
    <property type="project" value="UniProtKB-UniRule"/>
</dbReference>
<dbReference type="GO" id="GO:0000162">
    <property type="term" value="P:L-tryptophan biosynthetic process"/>
    <property type="evidence" value="ECO:0007669"/>
    <property type="project" value="UniProtKB-UniRule"/>
</dbReference>
<dbReference type="FunFam" id="1.20.970.10:FF:000006">
    <property type="entry name" value="Anthranilate phosphoribosyltransferase"/>
    <property type="match status" value="1"/>
</dbReference>
<dbReference type="FunFam" id="3.40.1030.10:FF:000002">
    <property type="entry name" value="Anthranilate phosphoribosyltransferase"/>
    <property type="match status" value="1"/>
</dbReference>
<dbReference type="Gene3D" id="3.40.1030.10">
    <property type="entry name" value="Nucleoside phosphorylase/phosphoribosyltransferase catalytic domain"/>
    <property type="match status" value="1"/>
</dbReference>
<dbReference type="Gene3D" id="1.20.970.10">
    <property type="entry name" value="Transferase, Pyrimidine Nucleoside Phosphorylase, Chain C"/>
    <property type="match status" value="1"/>
</dbReference>
<dbReference type="HAMAP" id="MF_00211">
    <property type="entry name" value="TrpD"/>
    <property type="match status" value="1"/>
</dbReference>
<dbReference type="InterPro" id="IPR005940">
    <property type="entry name" value="Anthranilate_Pribosyl_Tfrase"/>
</dbReference>
<dbReference type="InterPro" id="IPR000312">
    <property type="entry name" value="Glycosyl_Trfase_fam3"/>
</dbReference>
<dbReference type="InterPro" id="IPR017459">
    <property type="entry name" value="Glycosyl_Trfase_fam3_N_dom"/>
</dbReference>
<dbReference type="InterPro" id="IPR036320">
    <property type="entry name" value="Glycosyl_Trfase_fam3_N_dom_sf"/>
</dbReference>
<dbReference type="InterPro" id="IPR035902">
    <property type="entry name" value="Nuc_phospho_transferase"/>
</dbReference>
<dbReference type="NCBIfam" id="TIGR01245">
    <property type="entry name" value="trpD"/>
    <property type="match status" value="1"/>
</dbReference>
<dbReference type="PANTHER" id="PTHR43285">
    <property type="entry name" value="ANTHRANILATE PHOSPHORIBOSYLTRANSFERASE"/>
    <property type="match status" value="1"/>
</dbReference>
<dbReference type="PANTHER" id="PTHR43285:SF2">
    <property type="entry name" value="ANTHRANILATE PHOSPHORIBOSYLTRANSFERASE"/>
    <property type="match status" value="1"/>
</dbReference>
<dbReference type="Pfam" id="PF02885">
    <property type="entry name" value="Glycos_trans_3N"/>
    <property type="match status" value="1"/>
</dbReference>
<dbReference type="Pfam" id="PF00591">
    <property type="entry name" value="Glycos_transf_3"/>
    <property type="match status" value="1"/>
</dbReference>
<dbReference type="SUPFAM" id="SSF52418">
    <property type="entry name" value="Nucleoside phosphorylase/phosphoribosyltransferase catalytic domain"/>
    <property type="match status" value="1"/>
</dbReference>
<dbReference type="SUPFAM" id="SSF47648">
    <property type="entry name" value="Nucleoside phosphorylase/phosphoribosyltransferase N-terminal domain"/>
    <property type="match status" value="1"/>
</dbReference>
<comment type="function">
    <text evidence="1">Catalyzes the transfer of the phosphoribosyl group of 5-phosphorylribose-1-pyrophosphate (PRPP) to anthranilate to yield N-(5'-phosphoribosyl)-anthranilate (PRA).</text>
</comment>
<comment type="catalytic activity">
    <reaction evidence="1">
        <text>N-(5-phospho-beta-D-ribosyl)anthranilate + diphosphate = 5-phospho-alpha-D-ribose 1-diphosphate + anthranilate</text>
        <dbReference type="Rhea" id="RHEA:11768"/>
        <dbReference type="ChEBI" id="CHEBI:16567"/>
        <dbReference type="ChEBI" id="CHEBI:18277"/>
        <dbReference type="ChEBI" id="CHEBI:33019"/>
        <dbReference type="ChEBI" id="CHEBI:58017"/>
        <dbReference type="EC" id="2.4.2.18"/>
    </reaction>
</comment>
<comment type="cofactor">
    <cofactor evidence="1">
        <name>Mg(2+)</name>
        <dbReference type="ChEBI" id="CHEBI:18420"/>
    </cofactor>
    <text evidence="1">Binds 2 magnesium ions per monomer.</text>
</comment>
<comment type="pathway">
    <text evidence="1">Amino-acid biosynthesis; L-tryptophan biosynthesis; L-tryptophan from chorismate: step 2/5.</text>
</comment>
<comment type="subunit">
    <text evidence="1">Homodimer.</text>
</comment>
<comment type="similarity">
    <text evidence="1">Belongs to the anthranilate phosphoribosyltransferase family.</text>
</comment>
<gene>
    <name evidence="1" type="primary">trpD</name>
    <name type="ordered locus">Maqu_3519</name>
</gene>
<accession>A1U6H0</accession>
<name>TRPD_MARN8</name>
<sequence length="342" mass="36042">MDMKQALNRIASNLDLSRDEMKDVMRIVMNGEATDAQIGAFLMGLRLKSETIDEITGATEVMRELATGVTVNAEPLVDIVGTGGDGANLFNVSSAASFVVAAAGGYVAKHGNRGVSSKSGSADLIEKAGINLNMKPEEVARCVEQIGVGFMFAPAHHGAMKHAIGPRRELGCRTIFNILGPMTNPAGVTRQLIGVFTRELCRPMAEVLQRLGAEHIMVVCSKDGLDEISLATVTHVAELKDGEITEYDLTPEDLGIKSQSLVGLSVDGADESLALIKAAFGRSHDETTEKARDMIALNAGAAIYVAGLARTAKEGVDMALDAMGSGLAAGKMSELADFSQCF</sequence>
<organism>
    <name type="scientific">Marinobacter nauticus (strain ATCC 700491 / DSM 11845 / VT8)</name>
    <name type="common">Marinobacter aquaeolei</name>
    <dbReference type="NCBI Taxonomy" id="351348"/>
    <lineage>
        <taxon>Bacteria</taxon>
        <taxon>Pseudomonadati</taxon>
        <taxon>Pseudomonadota</taxon>
        <taxon>Gammaproteobacteria</taxon>
        <taxon>Pseudomonadales</taxon>
        <taxon>Marinobacteraceae</taxon>
        <taxon>Marinobacter</taxon>
    </lineage>
</organism>
<proteinExistence type="inferred from homology"/>
<evidence type="ECO:0000255" key="1">
    <source>
        <dbReference type="HAMAP-Rule" id="MF_00211"/>
    </source>
</evidence>
<reference key="1">
    <citation type="journal article" date="2011" name="Appl. Environ. Microbiol.">
        <title>Genomic potential of Marinobacter aquaeolei, a biogeochemical 'opportunitroph'.</title>
        <authorList>
            <person name="Singer E."/>
            <person name="Webb E.A."/>
            <person name="Nelson W.C."/>
            <person name="Heidelberg J.F."/>
            <person name="Ivanova N."/>
            <person name="Pati A."/>
            <person name="Edwards K.J."/>
        </authorList>
    </citation>
    <scope>NUCLEOTIDE SEQUENCE [LARGE SCALE GENOMIC DNA]</scope>
    <source>
        <strain>ATCC 700491 / DSM 11845 / VT8</strain>
    </source>
</reference>